<comment type="similarity">
    <text evidence="1">Belongs to the UPF0301 (AlgH) family.</text>
</comment>
<sequence length="187" mass="20630">MKTMCYFRNHFLIAMPALDDVNFARTVTFICEHNQDGAMGIIINRPLSITLDQMLQHIKVKDCPQEVGEMPVFLGGPIQQERGFVLHRPIGQWETTLRVGDEVGITTSRDILDAITQGKGPPQTLIALGYAGWGPNQLEQELAENAWLSTPANSTVVFDTPYQQRWEAAAALAGVDLSRLSGEIGHA</sequence>
<evidence type="ECO:0000255" key="1">
    <source>
        <dbReference type="HAMAP-Rule" id="MF_00758"/>
    </source>
</evidence>
<dbReference type="EMBL" id="CP000127">
    <property type="protein sequence ID" value="ABA56894.1"/>
    <property type="molecule type" value="Genomic_DNA"/>
</dbReference>
<dbReference type="RefSeq" id="WP_002813699.1">
    <property type="nucleotide sequence ID" value="NC_007484.1"/>
</dbReference>
<dbReference type="SMR" id="Q3JE52"/>
<dbReference type="FunCoup" id="Q3JE52">
    <property type="interactions" value="281"/>
</dbReference>
<dbReference type="STRING" id="323261.Noc_0368"/>
<dbReference type="KEGG" id="noc:Noc_0368"/>
<dbReference type="eggNOG" id="COG1678">
    <property type="taxonomic scope" value="Bacteria"/>
</dbReference>
<dbReference type="HOGENOM" id="CLU_057596_1_0_6"/>
<dbReference type="InParanoid" id="Q3JE52"/>
<dbReference type="Proteomes" id="UP000006838">
    <property type="component" value="Chromosome"/>
</dbReference>
<dbReference type="GO" id="GO:0005829">
    <property type="term" value="C:cytosol"/>
    <property type="evidence" value="ECO:0007669"/>
    <property type="project" value="TreeGrafter"/>
</dbReference>
<dbReference type="Gene3D" id="3.40.1740.10">
    <property type="entry name" value="VC0467-like"/>
    <property type="match status" value="1"/>
</dbReference>
<dbReference type="HAMAP" id="MF_00758">
    <property type="entry name" value="UPF0301"/>
    <property type="match status" value="1"/>
</dbReference>
<dbReference type="InterPro" id="IPR003774">
    <property type="entry name" value="AlgH-like"/>
</dbReference>
<dbReference type="NCBIfam" id="NF001266">
    <property type="entry name" value="PRK00228.1-1"/>
    <property type="match status" value="1"/>
</dbReference>
<dbReference type="PANTHER" id="PTHR30327">
    <property type="entry name" value="UNCHARACTERIZED PROTEIN YQGE"/>
    <property type="match status" value="1"/>
</dbReference>
<dbReference type="PANTHER" id="PTHR30327:SF1">
    <property type="entry name" value="UPF0301 PROTEIN YQGE"/>
    <property type="match status" value="1"/>
</dbReference>
<dbReference type="Pfam" id="PF02622">
    <property type="entry name" value="DUF179"/>
    <property type="match status" value="1"/>
</dbReference>
<dbReference type="SUPFAM" id="SSF143456">
    <property type="entry name" value="VC0467-like"/>
    <property type="match status" value="1"/>
</dbReference>
<protein>
    <recommendedName>
        <fullName evidence="1">UPF0301 protein Noc_0368</fullName>
    </recommendedName>
</protein>
<proteinExistence type="inferred from homology"/>
<keyword id="KW-1185">Reference proteome</keyword>
<name>Y368_NITOC</name>
<gene>
    <name type="ordered locus">Noc_0368</name>
</gene>
<feature type="chain" id="PRO_0000258847" description="UPF0301 protein Noc_0368">
    <location>
        <begin position="1"/>
        <end position="187"/>
    </location>
</feature>
<organism>
    <name type="scientific">Nitrosococcus oceani (strain ATCC 19707 / BCRC 17464 / JCM 30415 / NCIMB 11848 / C-107)</name>
    <dbReference type="NCBI Taxonomy" id="323261"/>
    <lineage>
        <taxon>Bacteria</taxon>
        <taxon>Pseudomonadati</taxon>
        <taxon>Pseudomonadota</taxon>
        <taxon>Gammaproteobacteria</taxon>
        <taxon>Chromatiales</taxon>
        <taxon>Chromatiaceae</taxon>
        <taxon>Nitrosococcus</taxon>
    </lineage>
</organism>
<reference key="1">
    <citation type="journal article" date="2006" name="Appl. Environ. Microbiol.">
        <title>Complete genome sequence of the marine, chemolithoautotrophic, ammonia-oxidizing bacterium Nitrosococcus oceani ATCC 19707.</title>
        <authorList>
            <person name="Klotz M.G."/>
            <person name="Arp D.J."/>
            <person name="Chain P.S.G."/>
            <person name="El-Sheikh A.F."/>
            <person name="Hauser L.J."/>
            <person name="Hommes N.G."/>
            <person name="Larimer F.W."/>
            <person name="Malfatti S.A."/>
            <person name="Norton J.M."/>
            <person name="Poret-Peterson A.T."/>
            <person name="Vergez L.M."/>
            <person name="Ward B.B."/>
        </authorList>
    </citation>
    <scope>NUCLEOTIDE SEQUENCE [LARGE SCALE GENOMIC DNA]</scope>
    <source>
        <strain>ATCC 19707 / BCRC 17464 / JCM 30415 / NCIMB 11848 / C-107</strain>
    </source>
</reference>
<accession>Q3JE52</accession>